<name>PSTA_HAEIN</name>
<organism>
    <name type="scientific">Haemophilus influenzae (strain ATCC 51907 / DSM 11121 / KW20 / Rd)</name>
    <dbReference type="NCBI Taxonomy" id="71421"/>
    <lineage>
        <taxon>Bacteria</taxon>
        <taxon>Pseudomonadati</taxon>
        <taxon>Pseudomonadota</taxon>
        <taxon>Gammaproteobacteria</taxon>
        <taxon>Pasteurellales</taxon>
        <taxon>Pasteurellaceae</taxon>
        <taxon>Haemophilus</taxon>
    </lineage>
</organism>
<gene>
    <name type="primary">pstA</name>
    <name type="ordered locus">HI_1381</name>
</gene>
<accession>P45190</accession>
<feature type="chain" id="PRO_0000060194" description="Phosphate transport system permease protein PstA">
    <location>
        <begin position="1"/>
        <end position="282"/>
    </location>
</feature>
<feature type="transmembrane region" description="Helical" evidence="2">
    <location>
        <begin position="22"/>
        <end position="42"/>
    </location>
</feature>
<feature type="transmembrane region" description="Helical" evidence="2">
    <location>
        <begin position="71"/>
        <end position="91"/>
    </location>
</feature>
<feature type="transmembrane region" description="Helical" evidence="2">
    <location>
        <begin position="111"/>
        <end position="131"/>
    </location>
</feature>
<feature type="transmembrane region" description="Helical" evidence="2">
    <location>
        <begin position="136"/>
        <end position="156"/>
    </location>
</feature>
<feature type="transmembrane region" description="Helical" evidence="2">
    <location>
        <begin position="198"/>
        <end position="218"/>
    </location>
</feature>
<feature type="transmembrane region" description="Helical" evidence="2">
    <location>
        <begin position="254"/>
        <end position="274"/>
    </location>
</feature>
<feature type="domain" description="ABC transmembrane type-1" evidence="2">
    <location>
        <begin position="71"/>
        <end position="274"/>
    </location>
</feature>
<comment type="function">
    <text evidence="1">Part of the binding-protein-dependent transport system for phosphate; probably responsible for the translocation of the substrate across the membrane.</text>
</comment>
<comment type="subcellular location">
    <subcellularLocation>
        <location evidence="1">Cell inner membrane</location>
        <topology evidence="2">Multi-pass membrane protein</topology>
    </subcellularLocation>
</comment>
<comment type="similarity">
    <text evidence="3">Belongs to the binding-protein-dependent transport system permease family. CysTW subfamily.</text>
</comment>
<evidence type="ECO:0000250" key="1"/>
<evidence type="ECO:0000255" key="2">
    <source>
        <dbReference type="PROSITE-ProRule" id="PRU00441"/>
    </source>
</evidence>
<evidence type="ECO:0000305" key="3"/>
<keyword id="KW-0997">Cell inner membrane</keyword>
<keyword id="KW-1003">Cell membrane</keyword>
<keyword id="KW-0472">Membrane</keyword>
<keyword id="KW-0592">Phosphate transport</keyword>
<keyword id="KW-1185">Reference proteome</keyword>
<keyword id="KW-0812">Transmembrane</keyword>
<keyword id="KW-1133">Transmembrane helix</keyword>
<keyword id="KW-0813">Transport</keyword>
<proteinExistence type="inferred from homology"/>
<protein>
    <recommendedName>
        <fullName>Phosphate transport system permease protein PstA</fullName>
    </recommendedName>
</protein>
<dbReference type="EMBL" id="L42023">
    <property type="protein sequence ID" value="AAC23026.1"/>
    <property type="molecule type" value="Genomic_DNA"/>
</dbReference>
<dbReference type="PIR" id="G64120">
    <property type="entry name" value="G64120"/>
</dbReference>
<dbReference type="RefSeq" id="NP_439533.1">
    <property type="nucleotide sequence ID" value="NC_000907.1"/>
</dbReference>
<dbReference type="SMR" id="P45190"/>
<dbReference type="STRING" id="71421.HI_1381"/>
<dbReference type="EnsemblBacteria" id="AAC23026">
    <property type="protein sequence ID" value="AAC23026"/>
    <property type="gene ID" value="HI_1381"/>
</dbReference>
<dbReference type="KEGG" id="hin:HI_1381"/>
<dbReference type="PATRIC" id="fig|71421.8.peg.1437"/>
<dbReference type="eggNOG" id="COG0581">
    <property type="taxonomic scope" value="Bacteria"/>
</dbReference>
<dbReference type="HOGENOM" id="CLU_033621_2_0_6"/>
<dbReference type="OrthoDB" id="9775069at2"/>
<dbReference type="PhylomeDB" id="P45190"/>
<dbReference type="BioCyc" id="HINF71421:G1GJ1-1407-MONOMER"/>
<dbReference type="Proteomes" id="UP000000579">
    <property type="component" value="Chromosome"/>
</dbReference>
<dbReference type="GO" id="GO:0005886">
    <property type="term" value="C:plasma membrane"/>
    <property type="evidence" value="ECO:0007669"/>
    <property type="project" value="UniProtKB-SubCell"/>
</dbReference>
<dbReference type="GO" id="GO:0005315">
    <property type="term" value="F:phosphate transmembrane transporter activity"/>
    <property type="evidence" value="ECO:0007669"/>
    <property type="project" value="InterPro"/>
</dbReference>
<dbReference type="GO" id="GO:0035435">
    <property type="term" value="P:phosphate ion transmembrane transport"/>
    <property type="evidence" value="ECO:0007669"/>
    <property type="project" value="InterPro"/>
</dbReference>
<dbReference type="CDD" id="cd06261">
    <property type="entry name" value="TM_PBP2"/>
    <property type="match status" value="1"/>
</dbReference>
<dbReference type="Gene3D" id="1.10.3720.10">
    <property type="entry name" value="MetI-like"/>
    <property type="match status" value="1"/>
</dbReference>
<dbReference type="InterPro" id="IPR000515">
    <property type="entry name" value="MetI-like"/>
</dbReference>
<dbReference type="InterPro" id="IPR035906">
    <property type="entry name" value="MetI-like_sf"/>
</dbReference>
<dbReference type="InterPro" id="IPR005672">
    <property type="entry name" value="Phosphate_PstA"/>
</dbReference>
<dbReference type="InterPro" id="IPR051408">
    <property type="entry name" value="Phosphate_transprt_permease"/>
</dbReference>
<dbReference type="NCBIfam" id="TIGR00974">
    <property type="entry name" value="3a0107s02c"/>
    <property type="match status" value="1"/>
</dbReference>
<dbReference type="PANTHER" id="PTHR42922">
    <property type="entry name" value="PHOSPHATE TRANSPORT SYSTEM PERMEASE PROTEIN PSTA"/>
    <property type="match status" value="1"/>
</dbReference>
<dbReference type="PANTHER" id="PTHR42922:SF1">
    <property type="entry name" value="PHOSPHATE TRANSPORT SYSTEM PERMEASE PROTEIN PSTA"/>
    <property type="match status" value="1"/>
</dbReference>
<dbReference type="Pfam" id="PF00528">
    <property type="entry name" value="BPD_transp_1"/>
    <property type="match status" value="1"/>
</dbReference>
<dbReference type="SUPFAM" id="SSF161098">
    <property type="entry name" value="MetI-like"/>
    <property type="match status" value="1"/>
</dbReference>
<dbReference type="PROSITE" id="PS50928">
    <property type="entry name" value="ABC_TM1"/>
    <property type="match status" value="1"/>
</dbReference>
<reference key="1">
    <citation type="journal article" date="1995" name="Science">
        <title>Whole-genome random sequencing and assembly of Haemophilus influenzae Rd.</title>
        <authorList>
            <person name="Fleischmann R.D."/>
            <person name="Adams M.D."/>
            <person name="White O."/>
            <person name="Clayton R.A."/>
            <person name="Kirkness E.F."/>
            <person name="Kerlavage A.R."/>
            <person name="Bult C.J."/>
            <person name="Tomb J.-F."/>
            <person name="Dougherty B.A."/>
            <person name="Merrick J.M."/>
            <person name="McKenney K."/>
            <person name="Sutton G.G."/>
            <person name="FitzHugh W."/>
            <person name="Fields C.A."/>
            <person name="Gocayne J.D."/>
            <person name="Scott J.D."/>
            <person name="Shirley R."/>
            <person name="Liu L.-I."/>
            <person name="Glodek A."/>
            <person name="Kelley J.M."/>
            <person name="Weidman J.F."/>
            <person name="Phillips C.A."/>
            <person name="Spriggs T."/>
            <person name="Hedblom E."/>
            <person name="Cotton M.D."/>
            <person name="Utterback T.R."/>
            <person name="Hanna M.C."/>
            <person name="Nguyen D.T."/>
            <person name="Saudek D.M."/>
            <person name="Brandon R.C."/>
            <person name="Fine L.D."/>
            <person name="Fritchman J.L."/>
            <person name="Fuhrmann J.L."/>
            <person name="Geoghagen N.S.M."/>
            <person name="Gnehm C.L."/>
            <person name="McDonald L.A."/>
            <person name="Small K.V."/>
            <person name="Fraser C.M."/>
            <person name="Smith H.O."/>
            <person name="Venter J.C."/>
        </authorList>
    </citation>
    <scope>NUCLEOTIDE SEQUENCE [LARGE SCALE GENOMIC DNA]</scope>
    <source>
        <strain>ATCC 51907 / DSM 11121 / KW20 / Rd</strain>
    </source>
</reference>
<sequence length="282" mass="31194">MKTNQNLRFYWRKTHNKLMLGLSYISVIIGLFWLCWILFTLITKGIPALSIDLFTQSTPAPNEKGGLLNALIGSFFIVGAGTLIGTPIGVLAGTYLAEYGRYSRFAQITRFLNDILLSAPSIIIGLFVYSLYVSKIEHFSGWAGAFALALLLIPIVVRTTDNMLLLVPNNLREAAAALGCSQWQVIMMICYRAAKSGILTGVLLAVARISGETAPLLFTALSNQFLSWNMNEPIANLPVVIYQYAASPFTDWNNLAWAGAALITLFVLCLNIFTRLFFQHKK</sequence>